<reference key="1">
    <citation type="journal article" date="2004" name="Proc. Natl. Acad. Sci. U.S.A.">
        <title>Comparison of the genome of the oral pathogen Treponema denticola with other spirochete genomes.</title>
        <authorList>
            <person name="Seshadri R."/>
            <person name="Myers G.S.A."/>
            <person name="Tettelin H."/>
            <person name="Eisen J.A."/>
            <person name="Heidelberg J.F."/>
            <person name="Dodson R.J."/>
            <person name="Davidsen T.M."/>
            <person name="DeBoy R.T."/>
            <person name="Fouts D.E."/>
            <person name="Haft D.H."/>
            <person name="Selengut J."/>
            <person name="Ren Q."/>
            <person name="Brinkac L.M."/>
            <person name="Madupu R."/>
            <person name="Kolonay J.F."/>
            <person name="Durkin S.A."/>
            <person name="Daugherty S.C."/>
            <person name="Shetty J."/>
            <person name="Shvartsbeyn A."/>
            <person name="Gebregeorgis E."/>
            <person name="Geer K."/>
            <person name="Tsegaye G."/>
            <person name="Malek J.A."/>
            <person name="Ayodeji B."/>
            <person name="Shatsman S."/>
            <person name="McLeod M.P."/>
            <person name="Smajs D."/>
            <person name="Howell J.K."/>
            <person name="Pal S."/>
            <person name="Amin A."/>
            <person name="Vashisth P."/>
            <person name="McNeill T.Z."/>
            <person name="Xiang Q."/>
            <person name="Sodergren E."/>
            <person name="Baca E."/>
            <person name="Weinstock G.M."/>
            <person name="Norris S.J."/>
            <person name="Fraser C.M."/>
            <person name="Paulsen I.T."/>
        </authorList>
    </citation>
    <scope>NUCLEOTIDE SEQUENCE [LARGE SCALE GENOMIC DNA]</scope>
    <source>
        <strain>ATCC 35405 / DSM 14222 / CIP 103919 / JCM 8153 / KCTC 15104</strain>
    </source>
</reference>
<dbReference type="EMBL" id="AE017226">
    <property type="protein sequence ID" value="AAS11515.1"/>
    <property type="molecule type" value="Genomic_DNA"/>
</dbReference>
<dbReference type="RefSeq" id="NP_971634.1">
    <property type="nucleotide sequence ID" value="NC_002967.9"/>
</dbReference>
<dbReference type="RefSeq" id="WP_002670497.1">
    <property type="nucleotide sequence ID" value="NC_002967.9"/>
</dbReference>
<dbReference type="SMR" id="Q73NX6"/>
<dbReference type="STRING" id="243275.TDE_1026"/>
<dbReference type="PaxDb" id="243275-TDE_1026"/>
<dbReference type="GeneID" id="2741504"/>
<dbReference type="KEGG" id="tde:TDE_1026"/>
<dbReference type="PATRIC" id="fig|243275.7.peg.988"/>
<dbReference type="eggNOG" id="COG0236">
    <property type="taxonomic scope" value="Bacteria"/>
</dbReference>
<dbReference type="HOGENOM" id="CLU_108696_5_1_12"/>
<dbReference type="OrthoDB" id="9804551at2"/>
<dbReference type="UniPathway" id="UPA00094"/>
<dbReference type="Proteomes" id="UP000008212">
    <property type="component" value="Chromosome"/>
</dbReference>
<dbReference type="GO" id="GO:0005829">
    <property type="term" value="C:cytosol"/>
    <property type="evidence" value="ECO:0007669"/>
    <property type="project" value="TreeGrafter"/>
</dbReference>
<dbReference type="GO" id="GO:0016020">
    <property type="term" value="C:membrane"/>
    <property type="evidence" value="ECO:0007669"/>
    <property type="project" value="GOC"/>
</dbReference>
<dbReference type="GO" id="GO:0000035">
    <property type="term" value="F:acyl binding"/>
    <property type="evidence" value="ECO:0007669"/>
    <property type="project" value="TreeGrafter"/>
</dbReference>
<dbReference type="GO" id="GO:0000036">
    <property type="term" value="F:acyl carrier activity"/>
    <property type="evidence" value="ECO:0007669"/>
    <property type="project" value="UniProtKB-UniRule"/>
</dbReference>
<dbReference type="GO" id="GO:0009245">
    <property type="term" value="P:lipid A biosynthetic process"/>
    <property type="evidence" value="ECO:0007669"/>
    <property type="project" value="TreeGrafter"/>
</dbReference>
<dbReference type="Gene3D" id="1.10.1200.10">
    <property type="entry name" value="ACP-like"/>
    <property type="match status" value="1"/>
</dbReference>
<dbReference type="HAMAP" id="MF_01217">
    <property type="entry name" value="Acyl_carrier"/>
    <property type="match status" value="1"/>
</dbReference>
<dbReference type="InterPro" id="IPR003231">
    <property type="entry name" value="ACP"/>
</dbReference>
<dbReference type="InterPro" id="IPR036736">
    <property type="entry name" value="ACP-like_sf"/>
</dbReference>
<dbReference type="InterPro" id="IPR009081">
    <property type="entry name" value="PP-bd_ACP"/>
</dbReference>
<dbReference type="NCBIfam" id="TIGR00517">
    <property type="entry name" value="acyl_carrier"/>
    <property type="match status" value="1"/>
</dbReference>
<dbReference type="NCBIfam" id="NF002148">
    <property type="entry name" value="PRK00982.1-2"/>
    <property type="match status" value="1"/>
</dbReference>
<dbReference type="NCBIfam" id="NF002150">
    <property type="entry name" value="PRK00982.1-4"/>
    <property type="match status" value="1"/>
</dbReference>
<dbReference type="PANTHER" id="PTHR20863">
    <property type="entry name" value="ACYL CARRIER PROTEIN"/>
    <property type="match status" value="1"/>
</dbReference>
<dbReference type="PANTHER" id="PTHR20863:SF76">
    <property type="entry name" value="CARRIER DOMAIN-CONTAINING PROTEIN"/>
    <property type="match status" value="1"/>
</dbReference>
<dbReference type="Pfam" id="PF00550">
    <property type="entry name" value="PP-binding"/>
    <property type="match status" value="1"/>
</dbReference>
<dbReference type="SUPFAM" id="SSF47336">
    <property type="entry name" value="ACP-like"/>
    <property type="match status" value="1"/>
</dbReference>
<dbReference type="PROSITE" id="PS50075">
    <property type="entry name" value="CARRIER"/>
    <property type="match status" value="1"/>
</dbReference>
<evidence type="ECO:0000255" key="1">
    <source>
        <dbReference type="HAMAP-Rule" id="MF_01217"/>
    </source>
</evidence>
<evidence type="ECO:0000255" key="2">
    <source>
        <dbReference type="PROSITE-ProRule" id="PRU00258"/>
    </source>
</evidence>
<sequence length="78" mass="9050">MDDLFKKIQQLIAAKLEIDEDKVTLDSSFRQDLGADSLDTYELVYALEEDMGIKIPDEKANEFETVRDAYEFIKSQQK</sequence>
<feature type="chain" id="PRO_1000066713" description="Acyl carrier protein">
    <location>
        <begin position="1"/>
        <end position="78"/>
    </location>
</feature>
<feature type="domain" description="Carrier" evidence="2">
    <location>
        <begin position="2"/>
        <end position="77"/>
    </location>
</feature>
<feature type="modified residue" description="O-(pantetheine 4'-phosphoryl)serine" evidence="2">
    <location>
        <position position="37"/>
    </location>
</feature>
<gene>
    <name evidence="1" type="primary">acpP</name>
    <name type="ordered locus">TDE_1026</name>
</gene>
<accession>Q73NX6</accession>
<name>ACP_TREDE</name>
<comment type="function">
    <text evidence="1">Carrier of the growing fatty acid chain in fatty acid biosynthesis.</text>
</comment>
<comment type="pathway">
    <text evidence="1">Lipid metabolism; fatty acid biosynthesis.</text>
</comment>
<comment type="subcellular location">
    <subcellularLocation>
        <location evidence="1">Cytoplasm</location>
    </subcellularLocation>
</comment>
<comment type="PTM">
    <text evidence="1">4'-phosphopantetheine is transferred from CoA to a specific serine of apo-ACP by AcpS. This modification is essential for activity because fatty acids are bound in thioester linkage to the sulfhydryl of the prosthetic group.</text>
</comment>
<comment type="similarity">
    <text evidence="1">Belongs to the acyl carrier protein (ACP) family.</text>
</comment>
<protein>
    <recommendedName>
        <fullName evidence="1">Acyl carrier protein</fullName>
        <shortName evidence="1">ACP</shortName>
    </recommendedName>
</protein>
<proteinExistence type="inferred from homology"/>
<keyword id="KW-0963">Cytoplasm</keyword>
<keyword id="KW-0275">Fatty acid biosynthesis</keyword>
<keyword id="KW-0276">Fatty acid metabolism</keyword>
<keyword id="KW-0444">Lipid biosynthesis</keyword>
<keyword id="KW-0443">Lipid metabolism</keyword>
<keyword id="KW-0596">Phosphopantetheine</keyword>
<keyword id="KW-0597">Phosphoprotein</keyword>
<keyword id="KW-1185">Reference proteome</keyword>
<organism>
    <name type="scientific">Treponema denticola (strain ATCC 35405 / DSM 14222 / CIP 103919 / JCM 8153 / KCTC 15104)</name>
    <dbReference type="NCBI Taxonomy" id="243275"/>
    <lineage>
        <taxon>Bacteria</taxon>
        <taxon>Pseudomonadati</taxon>
        <taxon>Spirochaetota</taxon>
        <taxon>Spirochaetia</taxon>
        <taxon>Spirochaetales</taxon>
        <taxon>Treponemataceae</taxon>
        <taxon>Treponema</taxon>
    </lineage>
</organism>